<accession>Q4ZWR8</accession>
<organism>
    <name type="scientific">Pseudomonas syringae pv. syringae (strain B728a)</name>
    <dbReference type="NCBI Taxonomy" id="205918"/>
    <lineage>
        <taxon>Bacteria</taxon>
        <taxon>Pseudomonadati</taxon>
        <taxon>Pseudomonadota</taxon>
        <taxon>Gammaproteobacteria</taxon>
        <taxon>Pseudomonadales</taxon>
        <taxon>Pseudomonadaceae</taxon>
        <taxon>Pseudomonas</taxon>
        <taxon>Pseudomonas syringae</taxon>
    </lineage>
</organism>
<evidence type="ECO:0000255" key="1">
    <source>
        <dbReference type="HAMAP-Rule" id="MF_00523"/>
    </source>
</evidence>
<gene>
    <name evidence="1" type="primary">lpxD</name>
    <name type="ordered locus">Psyr_1353</name>
</gene>
<reference key="1">
    <citation type="journal article" date="2005" name="Proc. Natl. Acad. Sci. U.S.A.">
        <title>Comparison of the complete genome sequences of Pseudomonas syringae pv. syringae B728a and pv. tomato DC3000.</title>
        <authorList>
            <person name="Feil H."/>
            <person name="Feil W.S."/>
            <person name="Chain P."/>
            <person name="Larimer F."/>
            <person name="Dibartolo G."/>
            <person name="Copeland A."/>
            <person name="Lykidis A."/>
            <person name="Trong S."/>
            <person name="Nolan M."/>
            <person name="Goltsman E."/>
            <person name="Thiel J."/>
            <person name="Malfatti S."/>
            <person name="Loper J.E."/>
            <person name="Lapidus A."/>
            <person name="Detter J.C."/>
            <person name="Land M."/>
            <person name="Richardson P.M."/>
            <person name="Kyrpides N.C."/>
            <person name="Ivanova N."/>
            <person name="Lindow S.E."/>
        </authorList>
    </citation>
    <scope>NUCLEOTIDE SEQUENCE [LARGE SCALE GENOMIC DNA]</scope>
    <source>
        <strain>B728a</strain>
    </source>
</reference>
<name>LPXD_PSEU2</name>
<feature type="chain" id="PRO_0000264416" description="UDP-3-O-acylglucosamine N-acyltransferase">
    <location>
        <begin position="1"/>
        <end position="351"/>
    </location>
</feature>
<feature type="active site" description="Proton acceptor" evidence="1">
    <location>
        <position position="240"/>
    </location>
</feature>
<keyword id="KW-0012">Acyltransferase</keyword>
<keyword id="KW-0441">Lipid A biosynthesis</keyword>
<keyword id="KW-0444">Lipid biosynthesis</keyword>
<keyword id="KW-0443">Lipid metabolism</keyword>
<keyword id="KW-0677">Repeat</keyword>
<keyword id="KW-0808">Transferase</keyword>
<dbReference type="EC" id="2.3.1.191" evidence="1"/>
<dbReference type="EMBL" id="CP000075">
    <property type="protein sequence ID" value="AAY36404.1"/>
    <property type="molecule type" value="Genomic_DNA"/>
</dbReference>
<dbReference type="RefSeq" id="WP_011266978.1">
    <property type="nucleotide sequence ID" value="NC_007005.1"/>
</dbReference>
<dbReference type="RefSeq" id="YP_234442.1">
    <property type="nucleotide sequence ID" value="NC_007005.1"/>
</dbReference>
<dbReference type="SMR" id="Q4ZWR8"/>
<dbReference type="STRING" id="205918.Psyr_1353"/>
<dbReference type="KEGG" id="psb:Psyr_1353"/>
<dbReference type="PATRIC" id="fig|205918.7.peg.1386"/>
<dbReference type="eggNOG" id="COG1044">
    <property type="taxonomic scope" value="Bacteria"/>
</dbReference>
<dbReference type="HOGENOM" id="CLU_049865_0_1_6"/>
<dbReference type="OrthoDB" id="9784739at2"/>
<dbReference type="UniPathway" id="UPA00973"/>
<dbReference type="Proteomes" id="UP000000426">
    <property type="component" value="Chromosome"/>
</dbReference>
<dbReference type="GO" id="GO:0016020">
    <property type="term" value="C:membrane"/>
    <property type="evidence" value="ECO:0007669"/>
    <property type="project" value="GOC"/>
</dbReference>
<dbReference type="GO" id="GO:0016410">
    <property type="term" value="F:N-acyltransferase activity"/>
    <property type="evidence" value="ECO:0007669"/>
    <property type="project" value="InterPro"/>
</dbReference>
<dbReference type="GO" id="GO:0009245">
    <property type="term" value="P:lipid A biosynthetic process"/>
    <property type="evidence" value="ECO:0007669"/>
    <property type="project" value="UniProtKB-UniRule"/>
</dbReference>
<dbReference type="CDD" id="cd03352">
    <property type="entry name" value="LbH_LpxD"/>
    <property type="match status" value="1"/>
</dbReference>
<dbReference type="Gene3D" id="1.20.5.170">
    <property type="match status" value="1"/>
</dbReference>
<dbReference type="Gene3D" id="2.160.10.10">
    <property type="entry name" value="Hexapeptide repeat proteins"/>
    <property type="match status" value="1"/>
</dbReference>
<dbReference type="Gene3D" id="3.40.1390.10">
    <property type="entry name" value="MurE/MurF, N-terminal domain"/>
    <property type="match status" value="1"/>
</dbReference>
<dbReference type="HAMAP" id="MF_00523">
    <property type="entry name" value="LpxD"/>
    <property type="match status" value="1"/>
</dbReference>
<dbReference type="InterPro" id="IPR001451">
    <property type="entry name" value="Hexapep"/>
</dbReference>
<dbReference type="InterPro" id="IPR018357">
    <property type="entry name" value="Hexapep_transf_CS"/>
</dbReference>
<dbReference type="InterPro" id="IPR007691">
    <property type="entry name" value="LpxD"/>
</dbReference>
<dbReference type="InterPro" id="IPR011004">
    <property type="entry name" value="Trimer_LpxA-like_sf"/>
</dbReference>
<dbReference type="InterPro" id="IPR020573">
    <property type="entry name" value="UDP_GlcNAc_AcTrfase_non-rep"/>
</dbReference>
<dbReference type="NCBIfam" id="TIGR01853">
    <property type="entry name" value="lipid_A_lpxD"/>
    <property type="match status" value="1"/>
</dbReference>
<dbReference type="NCBIfam" id="NF002060">
    <property type="entry name" value="PRK00892.1"/>
    <property type="match status" value="1"/>
</dbReference>
<dbReference type="PANTHER" id="PTHR43378">
    <property type="entry name" value="UDP-3-O-ACYLGLUCOSAMINE N-ACYLTRANSFERASE"/>
    <property type="match status" value="1"/>
</dbReference>
<dbReference type="PANTHER" id="PTHR43378:SF2">
    <property type="entry name" value="UDP-3-O-ACYLGLUCOSAMINE N-ACYLTRANSFERASE 1, MITOCHONDRIAL-RELATED"/>
    <property type="match status" value="1"/>
</dbReference>
<dbReference type="Pfam" id="PF00132">
    <property type="entry name" value="Hexapep"/>
    <property type="match status" value="2"/>
</dbReference>
<dbReference type="Pfam" id="PF04613">
    <property type="entry name" value="LpxD"/>
    <property type="match status" value="1"/>
</dbReference>
<dbReference type="SUPFAM" id="SSF51161">
    <property type="entry name" value="Trimeric LpxA-like enzymes"/>
    <property type="match status" value="1"/>
</dbReference>
<dbReference type="PROSITE" id="PS00101">
    <property type="entry name" value="HEXAPEP_TRANSFERASES"/>
    <property type="match status" value="1"/>
</dbReference>
<comment type="function">
    <text evidence="1">Catalyzes the N-acylation of UDP-3-O-acylglucosamine using 3-hydroxyacyl-ACP as the acyl donor. Is involved in the biosynthesis of lipid A, a phosphorylated glycolipid that anchors the lipopolysaccharide to the outer membrane of the cell.</text>
</comment>
<comment type="catalytic activity">
    <reaction evidence="1">
        <text>a UDP-3-O-[(3R)-3-hydroxyacyl]-alpha-D-glucosamine + a (3R)-hydroxyacyl-[ACP] = a UDP-2-N,3-O-bis[(3R)-3-hydroxyacyl]-alpha-D-glucosamine + holo-[ACP] + H(+)</text>
        <dbReference type="Rhea" id="RHEA:53836"/>
        <dbReference type="Rhea" id="RHEA-COMP:9685"/>
        <dbReference type="Rhea" id="RHEA-COMP:9945"/>
        <dbReference type="ChEBI" id="CHEBI:15378"/>
        <dbReference type="ChEBI" id="CHEBI:64479"/>
        <dbReference type="ChEBI" id="CHEBI:78827"/>
        <dbReference type="ChEBI" id="CHEBI:137740"/>
        <dbReference type="ChEBI" id="CHEBI:137748"/>
        <dbReference type="EC" id="2.3.1.191"/>
    </reaction>
</comment>
<comment type="pathway">
    <text evidence="1">Bacterial outer membrane biogenesis; LPS lipid A biosynthesis.</text>
</comment>
<comment type="subunit">
    <text evidence="1">Homotrimer.</text>
</comment>
<comment type="similarity">
    <text evidence="1">Belongs to the transferase hexapeptide repeat family. LpxD subfamily.</text>
</comment>
<sequence>MSITIKLGQLAEFLGATLRGDKDIEITGLATLQEAGPGQVSFLANPKYRKLLVDTQATAVLLKPADADGYAGNALVVPDTYLAYARISHFFDPKPKSSAGVHPTAVIAADALIDPAASIGAFAVIESGVRIAAGVTIGAHCFIGARCEIGEGGWLAPRVTLYHDVRIGKRVVIQSGAVLGGEGFGFAQDKGIYHKVAQIGGVTLGDDVEVGVNTAIDRGALADTRIGNGVKLDNQIQIAHNVQIGDHTAMAACVGISGSTKIGKHCMLAGGVGLVGHIEICDGVFITGMTMVTHSITEPGSYSSGTAMQPAAEWRKSAARLRKIDDMARRLQKLEKAIETVTCADNRSSDG</sequence>
<protein>
    <recommendedName>
        <fullName evidence="1">UDP-3-O-acylglucosamine N-acyltransferase</fullName>
        <ecNumber evidence="1">2.3.1.191</ecNumber>
    </recommendedName>
</protein>
<proteinExistence type="inferred from homology"/>